<dbReference type="EMBL" id="Y10769">
    <property type="protein sequence ID" value="CAA71742.1"/>
    <property type="molecule type" value="mRNA"/>
</dbReference>
<dbReference type="EMBL" id="AB002086">
    <property type="protein sequence ID" value="BAA21659.1"/>
    <property type="molecule type" value="mRNA"/>
</dbReference>
<dbReference type="EMBL" id="BC072464">
    <property type="protein sequence ID" value="AAH72464.1"/>
    <property type="molecule type" value="mRNA"/>
</dbReference>
<dbReference type="RefSeq" id="NP_114187.1">
    <property type="nucleotide sequence ID" value="NM_031981.2"/>
</dbReference>
<dbReference type="PDB" id="1I42">
    <property type="method" value="NMR"/>
    <property type="chains" value="A=282-370"/>
</dbReference>
<dbReference type="PDB" id="1JRU">
    <property type="method" value="NMR"/>
    <property type="chains" value="A=282-370"/>
</dbReference>
<dbReference type="PDB" id="1S3S">
    <property type="method" value="X-ray"/>
    <property type="resolution" value="2.90 A"/>
    <property type="chains" value="G/H/I=244-370"/>
</dbReference>
<dbReference type="PDB" id="1V92">
    <property type="method" value="NMR"/>
    <property type="chains" value="A=1-46"/>
</dbReference>
<dbReference type="PDB" id="1VAZ">
    <property type="method" value="NMR"/>
    <property type="chains" value="A=171-246"/>
</dbReference>
<dbReference type="PDB" id="7R7S">
    <property type="method" value="EM"/>
    <property type="resolution" value="4.23 A"/>
    <property type="chains" value="I/J=1-370"/>
</dbReference>
<dbReference type="PDB" id="7R7T">
    <property type="method" value="EM"/>
    <property type="resolution" value="4.50 A"/>
    <property type="chains" value="I=1-370"/>
</dbReference>
<dbReference type="PDBsum" id="1I42"/>
<dbReference type="PDBsum" id="1JRU"/>
<dbReference type="PDBsum" id="1S3S"/>
<dbReference type="PDBsum" id="1V92"/>
<dbReference type="PDBsum" id="1VAZ"/>
<dbReference type="PDBsum" id="7R7S"/>
<dbReference type="PDBsum" id="7R7T"/>
<dbReference type="BMRB" id="O35987"/>
<dbReference type="EMDB" id="EMD-24302"/>
<dbReference type="EMDB" id="EMD-24304"/>
<dbReference type="SMR" id="O35987"/>
<dbReference type="BioGRID" id="249844">
    <property type="interactions" value="4"/>
</dbReference>
<dbReference type="ComplexPortal" id="CPX-263">
    <property type="entry name" value="Vcp-Nsfl1c AAA ATPase complex"/>
</dbReference>
<dbReference type="CORUM" id="O35987"/>
<dbReference type="FunCoup" id="O35987">
    <property type="interactions" value="3675"/>
</dbReference>
<dbReference type="IntAct" id="O35987">
    <property type="interactions" value="18"/>
</dbReference>
<dbReference type="MINT" id="O35987"/>
<dbReference type="STRING" id="10116.ENSRNOP00000011654"/>
<dbReference type="iPTMnet" id="O35987"/>
<dbReference type="PhosphoSitePlus" id="O35987"/>
<dbReference type="jPOST" id="O35987"/>
<dbReference type="PaxDb" id="10116-ENSRNOP00000011654"/>
<dbReference type="GeneID" id="83809"/>
<dbReference type="KEGG" id="rno:83809"/>
<dbReference type="UCSC" id="RGD:619952">
    <property type="organism name" value="rat"/>
</dbReference>
<dbReference type="AGR" id="RGD:619952"/>
<dbReference type="CTD" id="55968"/>
<dbReference type="RGD" id="619952">
    <property type="gene designation" value="Nsfl1c"/>
</dbReference>
<dbReference type="VEuPathDB" id="HostDB:ENSRNOG00000008604"/>
<dbReference type="eggNOG" id="KOG2086">
    <property type="taxonomic scope" value="Eukaryota"/>
</dbReference>
<dbReference type="InParanoid" id="O35987"/>
<dbReference type="PhylomeDB" id="O35987"/>
<dbReference type="Reactome" id="R-RNO-9013407">
    <property type="pathway name" value="RHOH GTPase cycle"/>
</dbReference>
<dbReference type="EvolutionaryTrace" id="O35987"/>
<dbReference type="PRO" id="PR:O35987"/>
<dbReference type="Proteomes" id="UP000002494">
    <property type="component" value="Chromosome 3"/>
</dbReference>
<dbReference type="Bgee" id="ENSRNOG00000008604">
    <property type="expression patterns" value="Expressed in ovary and 20 other cell types or tissues"/>
</dbReference>
<dbReference type="ExpressionAtlas" id="O35987">
    <property type="expression patterns" value="baseline and differential"/>
</dbReference>
<dbReference type="GO" id="GO:0005694">
    <property type="term" value="C:chromosome"/>
    <property type="evidence" value="ECO:0007669"/>
    <property type="project" value="UniProtKB-SubCell"/>
</dbReference>
<dbReference type="GO" id="GO:0005737">
    <property type="term" value="C:cytoplasm"/>
    <property type="evidence" value="ECO:0000303"/>
    <property type="project" value="ComplexPortal"/>
</dbReference>
<dbReference type="GO" id="GO:0005829">
    <property type="term" value="C:cytosol"/>
    <property type="evidence" value="ECO:0000314"/>
    <property type="project" value="ParkinsonsUK-UCL"/>
</dbReference>
<dbReference type="GO" id="GO:0005795">
    <property type="term" value="C:Golgi stack"/>
    <property type="evidence" value="ECO:0007669"/>
    <property type="project" value="UniProtKB-SubCell"/>
</dbReference>
<dbReference type="GO" id="GO:0005634">
    <property type="term" value="C:nucleus"/>
    <property type="evidence" value="ECO:0000318"/>
    <property type="project" value="GO_Central"/>
</dbReference>
<dbReference type="GO" id="GO:0031616">
    <property type="term" value="C:spindle pole centrosome"/>
    <property type="evidence" value="ECO:0000314"/>
    <property type="project" value="UniProtKB"/>
</dbReference>
<dbReference type="GO" id="GO:1990730">
    <property type="term" value="C:VCP-NSFL1C complex"/>
    <property type="evidence" value="ECO:0000353"/>
    <property type="project" value="ParkinsonsUK-UCL"/>
</dbReference>
<dbReference type="GO" id="GO:0051117">
    <property type="term" value="F:ATPase binding"/>
    <property type="evidence" value="ECO:0000353"/>
    <property type="project" value="RGD"/>
</dbReference>
<dbReference type="GO" id="GO:0008289">
    <property type="term" value="F:lipid binding"/>
    <property type="evidence" value="ECO:0007669"/>
    <property type="project" value="UniProtKB-KW"/>
</dbReference>
<dbReference type="GO" id="GO:0043130">
    <property type="term" value="F:ubiquitin binding"/>
    <property type="evidence" value="ECO:0000314"/>
    <property type="project" value="BHF-UCL"/>
</dbReference>
<dbReference type="GO" id="GO:0000045">
    <property type="term" value="P:autophagosome assembly"/>
    <property type="evidence" value="ECO:0000318"/>
    <property type="project" value="GO_Central"/>
</dbReference>
<dbReference type="GO" id="GO:0000132">
    <property type="term" value="P:establishment of mitotic spindle orientation"/>
    <property type="evidence" value="ECO:0000266"/>
    <property type="project" value="RGD"/>
</dbReference>
<dbReference type="GO" id="GO:0007030">
    <property type="term" value="P:Golgi organization"/>
    <property type="evidence" value="ECO:0000314"/>
    <property type="project" value="RGD"/>
</dbReference>
<dbReference type="GO" id="GO:0061025">
    <property type="term" value="P:membrane fusion"/>
    <property type="evidence" value="ECO:0000314"/>
    <property type="project" value="RGD"/>
</dbReference>
<dbReference type="GO" id="GO:1904780">
    <property type="term" value="P:negative regulation of protein localization to centrosome"/>
    <property type="evidence" value="ECO:0000266"/>
    <property type="project" value="RGD"/>
</dbReference>
<dbReference type="GO" id="GO:0031468">
    <property type="term" value="P:nuclear membrane reassembly"/>
    <property type="evidence" value="ECO:0000318"/>
    <property type="project" value="GO_Central"/>
</dbReference>
<dbReference type="GO" id="GO:0046604">
    <property type="term" value="P:positive regulation of mitotic centrosome separation"/>
    <property type="evidence" value="ECO:0000266"/>
    <property type="project" value="RGD"/>
</dbReference>
<dbReference type="GO" id="GO:0043161">
    <property type="term" value="P:proteasome-mediated ubiquitin-dependent protein catabolic process"/>
    <property type="evidence" value="ECO:0000318"/>
    <property type="project" value="GO_Central"/>
</dbReference>
<dbReference type="CDD" id="cd14348">
    <property type="entry name" value="UBA_p47"/>
    <property type="match status" value="1"/>
</dbReference>
<dbReference type="CDD" id="cd17162">
    <property type="entry name" value="UBX_UBXN2C"/>
    <property type="match status" value="1"/>
</dbReference>
<dbReference type="FunFam" id="3.10.20.90:FF:000093">
    <property type="entry name" value="NSFL1 (P97) cofactor (P47)"/>
    <property type="match status" value="1"/>
</dbReference>
<dbReference type="FunFam" id="3.30.420.210:FF:000001">
    <property type="entry name" value="NSFL1 (P97) cofactor (P47)"/>
    <property type="match status" value="1"/>
</dbReference>
<dbReference type="FunFam" id="1.10.8.10:FF:000020">
    <property type="entry name" value="NSFL1 (p97) cofactor (p47)"/>
    <property type="match status" value="1"/>
</dbReference>
<dbReference type="Gene3D" id="1.10.8.10">
    <property type="entry name" value="DNA helicase RuvA subunit, C-terminal domain"/>
    <property type="match status" value="1"/>
</dbReference>
<dbReference type="Gene3D" id="3.10.20.90">
    <property type="entry name" value="Phosphatidylinositol 3-kinase Catalytic Subunit, Chain A, domain 1"/>
    <property type="match status" value="1"/>
</dbReference>
<dbReference type="Gene3D" id="3.30.420.210">
    <property type="entry name" value="SEP domain"/>
    <property type="match status" value="1"/>
</dbReference>
<dbReference type="IDEAL" id="IID50026"/>
<dbReference type="InterPro" id="IPR036241">
    <property type="entry name" value="NSFL1C_SEP_dom_sf"/>
</dbReference>
<dbReference type="InterPro" id="IPR012989">
    <property type="entry name" value="SEP_domain"/>
</dbReference>
<dbReference type="InterPro" id="IPR009060">
    <property type="entry name" value="UBA-like_sf"/>
</dbReference>
<dbReference type="InterPro" id="IPR029071">
    <property type="entry name" value="Ubiquitin-like_domsf"/>
</dbReference>
<dbReference type="InterPro" id="IPR001012">
    <property type="entry name" value="UBX_dom"/>
</dbReference>
<dbReference type="PANTHER" id="PTHR23333:SF24">
    <property type="entry name" value="NSFL1 COFACTOR P47"/>
    <property type="match status" value="1"/>
</dbReference>
<dbReference type="PANTHER" id="PTHR23333">
    <property type="entry name" value="UBX DOMAIN CONTAINING PROTEIN"/>
    <property type="match status" value="1"/>
</dbReference>
<dbReference type="Pfam" id="PF08059">
    <property type="entry name" value="SEP"/>
    <property type="match status" value="1"/>
</dbReference>
<dbReference type="Pfam" id="PF14555">
    <property type="entry name" value="UBA_4"/>
    <property type="match status" value="1"/>
</dbReference>
<dbReference type="Pfam" id="PF00789">
    <property type="entry name" value="UBX"/>
    <property type="match status" value="1"/>
</dbReference>
<dbReference type="SMART" id="SM00553">
    <property type="entry name" value="SEP"/>
    <property type="match status" value="1"/>
</dbReference>
<dbReference type="SMART" id="SM00166">
    <property type="entry name" value="UBX"/>
    <property type="match status" value="1"/>
</dbReference>
<dbReference type="SUPFAM" id="SSF102848">
    <property type="entry name" value="NSFL1 (p97 ATPase) cofactor p47, SEP domain"/>
    <property type="match status" value="1"/>
</dbReference>
<dbReference type="SUPFAM" id="SSF46934">
    <property type="entry name" value="UBA-like"/>
    <property type="match status" value="1"/>
</dbReference>
<dbReference type="SUPFAM" id="SSF54236">
    <property type="entry name" value="Ubiquitin-like"/>
    <property type="match status" value="1"/>
</dbReference>
<dbReference type="PROSITE" id="PS51399">
    <property type="entry name" value="SEP"/>
    <property type="match status" value="1"/>
</dbReference>
<dbReference type="PROSITE" id="PS50033">
    <property type="entry name" value="UBX"/>
    <property type="match status" value="1"/>
</dbReference>
<name>NSF1C_RAT</name>
<proteinExistence type="evidence at protein level"/>
<feature type="chain" id="PRO_0000210990" description="NSFL1 cofactor p47">
    <location>
        <begin position="1"/>
        <end position="370"/>
    </location>
</feature>
<feature type="domain" description="SEP" evidence="4">
    <location>
        <begin position="179"/>
        <end position="244"/>
    </location>
</feature>
<feature type="domain" description="UBX" evidence="3">
    <location>
        <begin position="291"/>
        <end position="368"/>
    </location>
</feature>
<feature type="region of interest" description="Disordered" evidence="5">
    <location>
        <begin position="54"/>
        <end position="73"/>
    </location>
</feature>
<feature type="region of interest" description="Disordered" evidence="5">
    <location>
        <begin position="80"/>
        <end position="116"/>
    </location>
</feature>
<feature type="region of interest" description="Disordered" evidence="5">
    <location>
        <begin position="138"/>
        <end position="157"/>
    </location>
</feature>
<feature type="short sequence motif" description="Nuclear localization signal">
    <location>
        <begin position="109"/>
        <end position="115"/>
    </location>
</feature>
<feature type="short sequence motif" description="Nuclear localization signal">
    <location>
        <begin position="172"/>
        <end position="175"/>
    </location>
</feature>
<feature type="modified residue" description="Phosphoserine" evidence="2">
    <location>
        <position position="74"/>
    </location>
</feature>
<feature type="modified residue" description="Phosphoserine" evidence="2">
    <location>
        <position position="102"/>
    </location>
</feature>
<feature type="modified residue" description="Phosphoserine" evidence="22 23">
    <location>
        <position position="114"/>
    </location>
</feature>
<feature type="modified residue" description="Phosphoserine; by CDK1" evidence="12">
    <location>
        <position position="140"/>
    </location>
</feature>
<feature type="modified residue" description="Phosphotyrosine" evidence="1">
    <location>
        <position position="167"/>
    </location>
</feature>
<feature type="modified residue" description="Phosphoserine" evidence="22 23">
    <location>
        <position position="176"/>
    </location>
</feature>
<feature type="modified residue" description="Phosphoserine" evidence="2">
    <location>
        <position position="192"/>
    </location>
</feature>
<feature type="modified residue" description="Phosphoserine" evidence="2">
    <location>
        <position position="272"/>
    </location>
</feature>
<feature type="mutagenesis site" description="Reduces ubiquitin binding and Golgi reassembly." evidence="10">
    <original>F</original>
    <variation>A</variation>
    <location>
        <position position="41"/>
    </location>
</feature>
<feature type="mutagenesis site" description="No effect on phosphorylation." evidence="12">
    <original>T</original>
    <variation>A</variation>
    <location>
        <position position="57"/>
    </location>
</feature>
<feature type="mutagenesis site" description="Strongly reduces nuclear location." evidence="12">
    <original>K</original>
    <variation>T</variation>
    <location>
        <position position="112"/>
    </location>
</feature>
<feature type="mutagenesis site" description="No effect on phosphorylation." evidence="12">
    <original>S</original>
    <variation>A</variation>
    <location>
        <position position="114"/>
    </location>
</feature>
<feature type="mutagenesis site" description="Abolishes phosphorylation by CDK1." evidence="12">
    <original>S</original>
    <variation>A</variation>
    <location>
        <position position="140"/>
    </location>
</feature>
<feature type="mutagenesis site" description="Strongly reduces binding to Golgi membranes." evidence="12">
    <original>S</original>
    <variation>D</variation>
    <location>
        <position position="140"/>
    </location>
</feature>
<feature type="mutagenesis site" description="Strongly reduces nuclear location." evidence="12">
    <original>R</original>
    <variation>T</variation>
    <location>
        <position position="173"/>
    </location>
</feature>
<feature type="mutagenesis site" description="No effect on phosphorylation." evidence="12">
    <original>S</original>
    <variation>A</variation>
    <location>
        <position position="272"/>
    </location>
</feature>
<feature type="mutagenesis site" description="Reduced interaction with VCP." evidence="14">
    <original>R</original>
    <variation>A</variation>
    <location>
        <position position="301"/>
    </location>
</feature>
<feature type="mutagenesis site" description="Strongly reduced interaction with VCP." evidence="14">
    <original>TFPN</original>
    <variation>AG</variation>
    <location>
        <begin position="342"/>
        <end position="345"/>
    </location>
</feature>
<feature type="mutagenesis site" description="Reduced interaction with VCP." evidence="14">
    <original>F</original>
    <variation>S</variation>
    <location>
        <position position="343"/>
    </location>
</feature>
<feature type="mutagenesis site" description="Reduced interaction with VCP." evidence="14">
    <original>N</original>
    <variation>A</variation>
    <location>
        <position position="345"/>
    </location>
</feature>
<feature type="helix" evidence="26">
    <location>
        <begin position="4"/>
        <end position="15"/>
    </location>
</feature>
<feature type="helix" evidence="26">
    <location>
        <begin position="20"/>
        <end position="29"/>
    </location>
</feature>
<feature type="helix" evidence="26">
    <location>
        <begin position="35"/>
        <end position="43"/>
    </location>
</feature>
<feature type="strand" evidence="27">
    <location>
        <begin position="181"/>
        <end position="187"/>
    </location>
</feature>
<feature type="strand" evidence="27">
    <location>
        <begin position="190"/>
        <end position="192"/>
    </location>
</feature>
<feature type="strand" evidence="27">
    <location>
        <begin position="198"/>
        <end position="200"/>
    </location>
</feature>
<feature type="helix" evidence="27">
    <location>
        <begin position="206"/>
        <end position="215"/>
    </location>
</feature>
<feature type="helix" evidence="27">
    <location>
        <begin position="221"/>
        <end position="224"/>
    </location>
</feature>
<feature type="strand" evidence="27">
    <location>
        <begin position="227"/>
        <end position="229"/>
    </location>
</feature>
<feature type="strand" evidence="27">
    <location>
        <begin position="232"/>
        <end position="237"/>
    </location>
</feature>
<feature type="turn" evidence="27">
    <location>
        <begin position="239"/>
        <end position="241"/>
    </location>
</feature>
<feature type="helix" evidence="25">
    <location>
        <begin position="275"/>
        <end position="286"/>
    </location>
</feature>
<feature type="strand" evidence="25">
    <location>
        <begin position="298"/>
        <end position="302"/>
    </location>
</feature>
<feature type="turn" evidence="25">
    <location>
        <begin position="303"/>
        <end position="306"/>
    </location>
</feature>
<feature type="strand" evidence="25">
    <location>
        <begin position="307"/>
        <end position="311"/>
    </location>
</feature>
<feature type="strand" evidence="24">
    <location>
        <begin position="314"/>
        <end position="316"/>
    </location>
</feature>
<feature type="helix" evidence="25">
    <location>
        <begin position="318"/>
        <end position="328"/>
    </location>
</feature>
<feature type="helix" evidence="25">
    <location>
        <begin position="331"/>
        <end position="333"/>
    </location>
</feature>
<feature type="strand" evidence="25">
    <location>
        <begin position="337"/>
        <end position="341"/>
    </location>
</feature>
<feature type="turn" evidence="25">
    <location>
        <begin position="342"/>
        <end position="345"/>
    </location>
</feature>
<feature type="helix" evidence="25">
    <location>
        <begin position="355"/>
        <end position="358"/>
    </location>
</feature>
<feature type="strand" evidence="25">
    <location>
        <begin position="364"/>
        <end position="369"/>
    </location>
</feature>
<evidence type="ECO:0000250" key="1">
    <source>
        <dbReference type="UniProtKB" id="Q9CZ44"/>
    </source>
</evidence>
<evidence type="ECO:0000250" key="2">
    <source>
        <dbReference type="UniProtKB" id="Q9UNZ2"/>
    </source>
</evidence>
<evidence type="ECO:0000255" key="3">
    <source>
        <dbReference type="PROSITE-ProRule" id="PRU00215"/>
    </source>
</evidence>
<evidence type="ECO:0000255" key="4">
    <source>
        <dbReference type="PROSITE-ProRule" id="PRU00732"/>
    </source>
</evidence>
<evidence type="ECO:0000256" key="5">
    <source>
        <dbReference type="SAM" id="MobiDB-lite"/>
    </source>
</evidence>
<evidence type="ECO:0000269" key="6">
    <source>
    </source>
</evidence>
<evidence type="ECO:0000269" key="7">
    <source>
    </source>
</evidence>
<evidence type="ECO:0000269" key="8">
    <source>
    </source>
</evidence>
<evidence type="ECO:0000269" key="9">
    <source>
    </source>
</evidence>
<evidence type="ECO:0000269" key="10">
    <source>
    </source>
</evidence>
<evidence type="ECO:0000269" key="11">
    <source>
    </source>
</evidence>
<evidence type="ECO:0000269" key="12">
    <source>
    </source>
</evidence>
<evidence type="ECO:0000269" key="13">
    <source>
    </source>
</evidence>
<evidence type="ECO:0000269" key="14">
    <source>
    </source>
</evidence>
<evidence type="ECO:0000269" key="15">
    <source>
    </source>
</evidence>
<evidence type="ECO:0000269" key="16">
    <source>
    </source>
</evidence>
<evidence type="ECO:0000269" key="17">
    <source>
    </source>
</evidence>
<evidence type="ECO:0000269" key="18">
    <source>
    </source>
</evidence>
<evidence type="ECO:0000269" key="19">
    <source>
    </source>
</evidence>
<evidence type="ECO:0000269" key="20">
    <source>
    </source>
</evidence>
<evidence type="ECO:0000305" key="21"/>
<evidence type="ECO:0007744" key="22">
    <source>
    </source>
</evidence>
<evidence type="ECO:0007744" key="23">
    <source>
    </source>
</evidence>
<evidence type="ECO:0007829" key="24">
    <source>
        <dbReference type="PDB" id="1I42"/>
    </source>
</evidence>
<evidence type="ECO:0007829" key="25">
    <source>
        <dbReference type="PDB" id="1S3S"/>
    </source>
</evidence>
<evidence type="ECO:0007829" key="26">
    <source>
        <dbReference type="PDB" id="1V92"/>
    </source>
</evidence>
<evidence type="ECO:0007829" key="27">
    <source>
        <dbReference type="PDB" id="1VAZ"/>
    </source>
</evidence>
<sequence length="370" mass="40680">MAEERQDALREFVAVTGAEEDRARFFLESAGWDLQIALASFYEDGGDEDIVTISQATPSSVSRGTAPSDNRVTSFRDLIHDQDEEEEEEEGQRFYAGGSERSGQQIVGPPRKKSPNELVDDLFKGAKEHGAVAVERVTKSPGETSKPRPFAGGGYRLGAAPEEESAYVAGERRRHSGQDVHVVLKLWKTGFSLDNGDLRSYQDPSNAQFLESIRRGEVPAELRRLAHGGQVNLDMEDHRDEDFVKPKGAFKAFTGEGQKLGSTAPQVLNTSSPAQQAENEAKASSSILINEAEPTTNIQIRLADGGRLVQKFNHSHRISDIRLFIVDARPAMAATSFVLMTTFPNKELADENQTLKEANLLNAVIVQRLT</sequence>
<keyword id="KW-0002">3D-structure</keyword>
<keyword id="KW-0158">Chromosome</keyword>
<keyword id="KW-0963">Cytoplasm</keyword>
<keyword id="KW-0206">Cytoskeleton</keyword>
<keyword id="KW-0903">Direct protein sequencing</keyword>
<keyword id="KW-0333">Golgi apparatus</keyword>
<keyword id="KW-0446">Lipid-binding</keyword>
<keyword id="KW-0539">Nucleus</keyword>
<keyword id="KW-0597">Phosphoprotein</keyword>
<keyword id="KW-1185">Reference proteome</keyword>
<reference key="1">
    <citation type="journal article" date="1997" name="Chromosoma">
        <title>Molecular characterization and expression pattern of XY body-associated protein XY40 of the rat.</title>
        <authorList>
            <person name="Alsheimer M."/>
            <person name="Imamichi Y."/>
            <person name="Heid H."/>
            <person name="Benavente R."/>
        </authorList>
    </citation>
    <scope>NUCLEOTIDE SEQUENCE [MRNA]</scope>
    <scope>PROTEIN SEQUENCE OF 200-209; 283-292 AND 323-328</scope>
    <scope>TISSUE SPECIFICITY</scope>
    <source>
        <strain>Wistar</strain>
        <tissue>Spermatocyte</tissue>
    </source>
</reference>
<reference key="2">
    <citation type="journal article" date="1997" name="Nature">
        <title>p47 is a cofactor for p97-mediated membrane fusion.</title>
        <authorList>
            <person name="Kondo H."/>
            <person name="Rabouille C."/>
            <person name="Newman R."/>
            <person name="Levine T.P."/>
            <person name="Pappin D."/>
            <person name="Freemont P."/>
            <person name="Warren G."/>
        </authorList>
    </citation>
    <scope>NUCLEOTIDE SEQUENCE [MRNA]</scope>
    <scope>PROTEIN SEQUENCE OF 11-22; 94-101; 157-172; 189-214; 260-282; 323-346 AND 357-368</scope>
    <scope>IDENTIFICATION BY MASS SPECTROMETRY</scope>
    <scope>FUNCTION</scope>
    <scope>INTERACTION WITH VCP</scope>
    <scope>SUBCELLULAR LOCATION</scope>
    <scope>TISSUE SPECIFICITY</scope>
    <source>
        <tissue>Liver</tissue>
    </source>
</reference>
<reference key="3">
    <citation type="journal article" date="2004" name="Genome Res.">
        <title>The status, quality, and expansion of the NIH full-length cDNA project: the Mammalian Gene Collection (MGC).</title>
        <authorList>
            <consortium name="The MGC Project Team"/>
        </authorList>
    </citation>
    <scope>NUCLEOTIDE SEQUENCE [LARGE SCALE MRNA]</scope>
    <source>
        <tissue>Lung</tissue>
    </source>
</reference>
<reference key="4">
    <citation type="submission" date="2007-04" db="UniProtKB">
        <authorList>
            <person name="Lubec G."/>
            <person name="Chen W.-Q."/>
        </authorList>
    </citation>
    <scope>PROTEIN SEQUENCE OF 200-214 AND 283-301</scope>
    <scope>IDENTIFICATION BY MASS SPECTROMETRY</scope>
    <source>
        <strain>Sprague-Dawley</strain>
        <tissue>Hippocampus</tissue>
    </source>
</reference>
<reference key="5">
    <citation type="journal article" date="1992" name="Proc. Natl. Acad. Sci. U.S.A.">
        <title>Meiosis-specific protein selectively associated with sex chromosomes of rat pachytene spermatocytes.</title>
        <authorList>
            <person name="Smith A."/>
            <person name="Benavente R."/>
        </authorList>
    </citation>
    <scope>TISSUE SPECIFICITY</scope>
    <scope>SUBCELLULAR LOCATION</scope>
</reference>
<reference key="6">
    <citation type="journal article" date="1998" name="Cell">
        <title>Syntaxin 5 is a common component of the NSF- and p97-mediated reassembly pathways of Golgi cisternae from mitotic Golgi fragments in vitro.</title>
        <authorList>
            <person name="Rabouille C."/>
            <person name="Kondo H."/>
            <person name="Newman R."/>
            <person name="Hui N."/>
            <person name="Freemont P."/>
            <person name="Warren G."/>
        </authorList>
    </citation>
    <scope>INTERACTION WITH STX5A</scope>
</reference>
<reference key="7">
    <citation type="journal article" date="1998" name="FEBS Lett.">
        <title>The p47 co-factor regulates the ATPase activity of the membrane fusion protein, p97.</title>
        <authorList>
            <person name="Meyer H.H."/>
            <person name="Kondo H."/>
            <person name="Warren G."/>
        </authorList>
    </citation>
    <scope>FUNCTION</scope>
</reference>
<reference key="8">
    <citation type="journal article" date="2000" name="EMBO J.">
        <title>A complex of mammalian ufd1 and npl4 links the AAA-ATPase, p97, to ubiquitin and nuclear transport pathways.</title>
        <authorList>
            <person name="Meyer H.H."/>
            <person name="Shorter J.G."/>
            <person name="Seemann J."/>
            <person name="Pappin D."/>
            <person name="Warren G."/>
        </authorList>
    </citation>
    <scope>INTERACTION WITH VCP</scope>
</reference>
<reference key="9">
    <citation type="journal article" date="2000" name="Mol. Biol. Cell">
        <title>Role of p97 and syntaxin 5 in the assembly of transitional endoplasmic reticulum.</title>
        <authorList>
            <person name="Roy L."/>
            <person name="Bergeron J.J.M."/>
            <person name="Lavoie C."/>
            <person name="Hendriks R."/>
            <person name="Gushue J."/>
            <person name="Fazel A."/>
            <person name="Pelletier A."/>
            <person name="Morre D.J."/>
            <person name="Subramaniam V.N."/>
            <person name="Hong W."/>
            <person name="Paiement J."/>
        </authorList>
    </citation>
    <scope>FUNCTION</scope>
</reference>
<reference key="10">
    <citation type="journal article" date="2002" name="Biochemistry">
        <title>Phospholipid species act as modulators in p97/p47-mediated fusion of Golgi membranes.</title>
        <authorList>
            <person name="Pecheur E.-I."/>
            <person name="Martin I."/>
            <person name="Maier O."/>
            <person name="Bakowsky U."/>
            <person name="Ruysschaert J.-M."/>
            <person name="Hoekstra D."/>
        </authorList>
    </citation>
    <scope>INTERACTION WITH MEMBRANES</scope>
</reference>
<reference key="11">
    <citation type="journal article" date="2002" name="EMBO J.">
        <title>Direct binding of ubiquitin conjugates by the mammalian p97 adaptor complexes, p47 and Ufd1-Npl4.</title>
        <authorList>
            <person name="Meyer H.H."/>
            <person name="Wang Y."/>
            <person name="Warren G."/>
        </authorList>
    </citation>
    <scope>FUNCTION</scope>
    <scope>MUTAGENESIS OF PHE-41</scope>
</reference>
<reference key="12">
    <citation type="journal article" date="2002" name="J. Cell Biol.">
        <title>VCIP135, a novel essential factor for p97/p47-mediated membrane fusion, is required for Golgi and ER assembly in vivo.</title>
        <authorList>
            <person name="Uchiyama K."/>
            <person name="Jokitalo E."/>
            <person name="Kano F."/>
            <person name="Murata M."/>
            <person name="Zhang X."/>
            <person name="Canas B."/>
            <person name="Newman R."/>
            <person name="Rabouille C."/>
            <person name="Pappin D."/>
            <person name="Freemont P."/>
            <person name="Kondo H."/>
        </authorList>
    </citation>
    <scope>INTERACTION WITH VCIP135</scope>
</reference>
<reference key="13">
    <citation type="journal article" date="2003" name="J. Cell Biol.">
        <title>The localization and phosphorylation of p47 are important for Golgi disassembly-assembly during the cell cycle.</title>
        <authorList>
            <person name="Uchiyama K."/>
            <person name="Jokitalo E."/>
            <person name="Lindman M."/>
            <person name="Jackman M."/>
            <person name="Kano F."/>
            <person name="Murata M."/>
            <person name="Zhang X."/>
            <person name="Kondo H."/>
        </authorList>
    </citation>
    <scope>PHOSPHORYLATION AT SER-140</scope>
    <scope>MUTAGENESIS OF THR-57; LYS-112; SER-114; SER-140; ARG-173 AND SER-272</scope>
    <scope>SUBCELLULAR LOCATION</scope>
</reference>
<reference key="14">
    <citation type="journal article" date="2006" name="Proc. Natl. Acad. Sci. U.S.A.">
        <title>Quantitative phosphoproteomics of vasopressin-sensitive renal cells: regulation of aquaporin-2 phosphorylation at two sites.</title>
        <authorList>
            <person name="Hoffert J.D."/>
            <person name="Pisitkun T."/>
            <person name="Wang G."/>
            <person name="Shen R.-F."/>
            <person name="Knepper M.A."/>
        </authorList>
    </citation>
    <scope>PHOSPHORYLATION [LARGE SCALE ANALYSIS] AT SER-114 AND SER-176</scope>
    <scope>IDENTIFICATION BY MASS SPECTROMETRY [LARGE SCALE ANALYSIS]</scope>
</reference>
<reference key="15">
    <citation type="journal article" date="2012" name="Nat. Commun.">
        <title>Quantitative maps of protein phosphorylation sites across 14 different rat organs and tissues.</title>
        <authorList>
            <person name="Lundby A."/>
            <person name="Secher A."/>
            <person name="Lage K."/>
            <person name="Nordsborg N.B."/>
            <person name="Dmytriyev A."/>
            <person name="Lundby C."/>
            <person name="Olsen J.V."/>
        </authorList>
    </citation>
    <scope>PHOSPHORYLATION [LARGE SCALE ANALYSIS] AT SER-114 AND SER-176</scope>
    <scope>IDENTIFICATION BY MASS SPECTROMETRY [LARGE SCALE ANALYSIS]</scope>
</reference>
<reference key="16">
    <citation type="journal article" date="2013" name="J. Cell Biol.">
        <title>The UBXN-2/p37/p47 adaptors of CDC-48/p97 regulate mitosis by limiting the centrosomal recruitment of Aurora A.</title>
        <authorList>
            <person name="Kress E."/>
            <person name="Schwager F."/>
            <person name="Holtackers R."/>
            <person name="Seiler J."/>
            <person name="Prodon F."/>
            <person name="Zanin E."/>
            <person name="Eiteneuer A."/>
            <person name="Toya M."/>
            <person name="Sugimoto A."/>
            <person name="Meyer H."/>
            <person name="Meraldi P."/>
            <person name="Gotta M."/>
        </authorList>
    </citation>
    <scope>SUBCELLULAR LOCATION</scope>
</reference>
<reference key="17">
    <citation type="journal article" date="2001" name="J. Mol. Biol.">
        <title>Solution structure and interaction surface of the C-terminal domain from p47: a major p97-cofactor involved in SNARE disassembly.</title>
        <authorList>
            <person name="Yuan X."/>
            <person name="Shaw A."/>
            <person name="Zhang X."/>
            <person name="Kondo H."/>
            <person name="Lally J."/>
            <person name="Freemont P.S."/>
            <person name="Matthews S."/>
        </authorList>
    </citation>
    <scope>STRUCTURE BY NMR OF 282-370</scope>
    <scope>INTERACTION WITH VCP</scope>
</reference>
<reference key="18">
    <citation type="journal article" date="2004" name="EMBO J.">
        <title>Structural basis of the interaction between the AAA ATPase p97/VCP and its adaptor protein p47.</title>
        <authorList>
            <person name="Dreveny I."/>
            <person name="Kondo H."/>
            <person name="Uchiyama K."/>
            <person name="Shaw A."/>
            <person name="Zhang X."/>
            <person name="Freemont P.S."/>
        </authorList>
    </citation>
    <scope>X-RAY CRYSTALLOGRAPHY (2.9 ANGSTROMS) OF 244-370</scope>
    <scope>INTERACTION WITH VCP</scope>
    <scope>MUTAGENESIS OF ARG-301; 342-THR--ASN-345; PHE-343 AND ASN-345</scope>
</reference>
<reference key="19">
    <citation type="journal article" date="2004" name="EMBO J.">
        <title>Structure, dynamics and interactions of p47, a major adaptor of the AAA ATPase, p97.</title>
        <authorList>
            <person name="Yuan X."/>
            <person name="Simpson P."/>
            <person name="McKeown C."/>
            <person name="Kondo H."/>
            <person name="Uchiyama K."/>
            <person name="Wallis R."/>
            <person name="Dreveny I."/>
            <person name="Keetch C."/>
            <person name="Zhang X."/>
            <person name="Robinson C."/>
            <person name="Freemont P."/>
            <person name="Matthews S."/>
        </authorList>
    </citation>
    <scope>STRUCTURE BY NMR OF 1-46 IN COMPLEX WITH UBIQUITIN</scope>
    <scope>STRUCTURE BY NMR OF 171-246</scope>
    <scope>INTERACTION WITH VCP</scope>
</reference>
<protein>
    <recommendedName>
        <fullName>NSFL1 cofactor p47</fullName>
    </recommendedName>
    <alternativeName>
        <fullName>XY body-associated protein XY40</fullName>
    </alternativeName>
    <alternativeName>
        <fullName>p97 cofactor p47</fullName>
    </alternativeName>
</protein>
<gene>
    <name type="primary">Nsfl1c</name>
</gene>
<organism>
    <name type="scientific">Rattus norvegicus</name>
    <name type="common">Rat</name>
    <dbReference type="NCBI Taxonomy" id="10116"/>
    <lineage>
        <taxon>Eukaryota</taxon>
        <taxon>Metazoa</taxon>
        <taxon>Chordata</taxon>
        <taxon>Craniata</taxon>
        <taxon>Vertebrata</taxon>
        <taxon>Euteleostomi</taxon>
        <taxon>Mammalia</taxon>
        <taxon>Eutheria</taxon>
        <taxon>Euarchontoglires</taxon>
        <taxon>Glires</taxon>
        <taxon>Rodentia</taxon>
        <taxon>Myomorpha</taxon>
        <taxon>Muroidea</taxon>
        <taxon>Muridae</taxon>
        <taxon>Murinae</taxon>
        <taxon>Rattus</taxon>
    </lineage>
</organism>
<comment type="function">
    <text evidence="2 7 10 17 20">Reduces the ATPase activity of VCP (PubMed:9214505, PubMed:9824302). Necessary for the fragmentation of Golgi stacks during mitosis and for VCP-mediated reassembly of Golgi stacks after mitosis (PubMed:12411482). May play a role in VCP-mediated formation of transitional endoplasmic reticulum (tER) (PubMed:10930451). Inhibits the activity of CTSL (in vitro) (By similarity). Together with UBXN2B/p37, regulates the centrosomal levels of kinase AURKA/Aurora A during mitotic progression by promoting AURKA removal from centrosomes in prophase (By similarity). Also, regulates spindle orientation during mitosis (By similarity).</text>
</comment>
<comment type="subunit">
    <text evidence="6 8 9 11 14 15 17 19">Part of a ternary complex containing STX5A, NSFL1C and VCP. NSFL1C forms a homotrimer that binds to one end of a VCP homohexamer. The complex binds to membranes enriched in phosphatidylethanolamine-containing lipids and promotes Golgi membrane fusion. Interaction with VCIP135 leads to dissociation of the complex via ATP hydrolysis by VCP. Binds ubiquitin and mono-ubiquitinated proteins via its N-terminal UBA-like domain when bound to VCP.</text>
</comment>
<comment type="interaction">
    <interactant intactId="EBI-1993760">
        <id>O35987</id>
    </interactant>
    <interactant intactId="EBI-399011">
        <id>P46462</id>
        <label>Vcp</label>
    </interactant>
    <organismsDiffer>false</organismsDiffer>
    <experiments>12</experiments>
</comment>
<comment type="interaction">
    <interactant intactId="EBI-1993760">
        <id>O35987</id>
    </interactant>
    <interactant intactId="EBI-80597">
        <id>Q01853</id>
        <label>Vcp</label>
    </interactant>
    <organismsDiffer>true</organismsDiffer>
    <experiments>8</experiments>
</comment>
<comment type="subcellular location">
    <subcellularLocation>
        <location evidence="12">Nucleus</location>
    </subcellularLocation>
    <subcellularLocation>
        <location evidence="12 17">Golgi apparatus</location>
        <location evidence="12 17">Golgi stack</location>
    </subcellularLocation>
    <subcellularLocation>
        <location evidence="13">Chromosome</location>
    </subcellularLocation>
    <subcellularLocation>
        <location evidence="16">Cytoplasm</location>
        <location evidence="16">Cytoskeleton</location>
        <location evidence="16">Microtubule organizing center</location>
        <location evidence="16">Centrosome</location>
    </subcellularLocation>
    <text evidence="12 13 16">Predominantly nuclear in interphase cells (PubMed:12810701). Bound to the axial elements of sex chromosomes in pachytene spermatocytes (PubMed:1495983). A small proportion of the protein is cytoplasmic, associated with Golgi stacks (PubMed:12810701). Localizes to centrosome during mitotic prophase and metaphase (PubMed:23649807).</text>
</comment>
<comment type="tissue specificity">
    <text evidence="13 17 18">Highly expressed in heart, brain, spleen, lung, liver, muscle, kidney and testis.</text>
</comment>
<comment type="developmental stage">
    <text>Highly expressed in pachytene spermatocytes during spermatogenesis.</text>
</comment>
<comment type="PTM">
    <text evidence="12">Phosphorylated during mitosis. Phosphorylation inhibits interaction with Golgi membranes and is required for the fragmentation of the Golgi stacks during mitosis.</text>
</comment>
<comment type="similarity">
    <text evidence="21">Belongs to the NSFL1C family.</text>
</comment>
<accession>O35987</accession>